<feature type="chain" id="PRO_0000048951" description="Homeobox protein Nkx-6.1">
    <location>
        <begin position="1"/>
        <end position="367"/>
    </location>
</feature>
<feature type="DNA-binding region" description="Homeobox" evidence="3">
    <location>
        <begin position="236"/>
        <end position="295"/>
    </location>
</feature>
<feature type="region of interest" description="Disordered" evidence="4">
    <location>
        <begin position="36"/>
        <end position="133"/>
    </location>
</feature>
<feature type="region of interest" description="Repressor domain" evidence="1">
    <location>
        <begin position="102"/>
        <end position="268"/>
    </location>
</feature>
<feature type="region of interest" description="Disordered" evidence="4">
    <location>
        <begin position="294"/>
        <end position="367"/>
    </location>
</feature>
<feature type="region of interest" description="Involved in DNA-binding" evidence="1">
    <location>
        <begin position="306"/>
        <end position="367"/>
    </location>
</feature>
<feature type="compositionally biased region" description="Low complexity" evidence="4">
    <location>
        <begin position="48"/>
        <end position="59"/>
    </location>
</feature>
<feature type="compositionally biased region" description="Low complexity" evidence="4">
    <location>
        <begin position="78"/>
        <end position="91"/>
    </location>
</feature>
<feature type="compositionally biased region" description="Low complexity" evidence="4">
    <location>
        <begin position="110"/>
        <end position="133"/>
    </location>
</feature>
<feature type="compositionally biased region" description="Basic and acidic residues" evidence="4">
    <location>
        <begin position="304"/>
        <end position="317"/>
    </location>
</feature>
<feature type="modified residue" description="Asymmetric dimethylarginine" evidence="6">
    <location>
        <position position="189"/>
    </location>
</feature>
<feature type="sequence conflict" description="In Ref. 1; AAD11962." evidence="5" ref="1">
    <original>D</original>
    <variation>N</variation>
    <location>
        <position position="100"/>
    </location>
</feature>
<reference key="1">
    <citation type="journal article" date="1997" name="Genomics">
        <title>Isolation, characterization, and chromosomal mapping of the human Nkx6.1 gene (NKX6A), a new pancreatic islet homeobox gene.</title>
        <authorList>
            <person name="Inoue H."/>
            <person name="Rudnick A."/>
            <person name="German M.S."/>
            <person name="Veile R."/>
            <person name="Donis-Keller H."/>
            <person name="Permutt M.A."/>
        </authorList>
    </citation>
    <scope>NUCLEOTIDE SEQUENCE [GENOMIC DNA]</scope>
    <source>
        <tissue>Pancreatic islet</tissue>
    </source>
</reference>
<reference key="2">
    <citation type="journal article" date="2005" name="Nature">
        <title>Generation and annotation of the DNA sequences of human chromosomes 2 and 4.</title>
        <authorList>
            <person name="Hillier L.W."/>
            <person name="Graves T.A."/>
            <person name="Fulton R.S."/>
            <person name="Fulton L.A."/>
            <person name="Pepin K.H."/>
            <person name="Minx P."/>
            <person name="Wagner-McPherson C."/>
            <person name="Layman D."/>
            <person name="Wylie K."/>
            <person name="Sekhon M."/>
            <person name="Becker M.C."/>
            <person name="Fewell G.A."/>
            <person name="Delehaunty K.D."/>
            <person name="Miner T.L."/>
            <person name="Nash W.E."/>
            <person name="Kremitzki C."/>
            <person name="Oddy L."/>
            <person name="Du H."/>
            <person name="Sun H."/>
            <person name="Bradshaw-Cordum H."/>
            <person name="Ali J."/>
            <person name="Carter J."/>
            <person name="Cordes M."/>
            <person name="Harris A."/>
            <person name="Isak A."/>
            <person name="van Brunt A."/>
            <person name="Nguyen C."/>
            <person name="Du F."/>
            <person name="Courtney L."/>
            <person name="Kalicki J."/>
            <person name="Ozersky P."/>
            <person name="Abbott S."/>
            <person name="Armstrong J."/>
            <person name="Belter E.A."/>
            <person name="Caruso L."/>
            <person name="Cedroni M."/>
            <person name="Cotton M."/>
            <person name="Davidson T."/>
            <person name="Desai A."/>
            <person name="Elliott G."/>
            <person name="Erb T."/>
            <person name="Fronick C."/>
            <person name="Gaige T."/>
            <person name="Haakenson W."/>
            <person name="Haglund K."/>
            <person name="Holmes A."/>
            <person name="Harkins R."/>
            <person name="Kim K."/>
            <person name="Kruchowski S.S."/>
            <person name="Strong C.M."/>
            <person name="Grewal N."/>
            <person name="Goyea E."/>
            <person name="Hou S."/>
            <person name="Levy A."/>
            <person name="Martinka S."/>
            <person name="Mead K."/>
            <person name="McLellan M.D."/>
            <person name="Meyer R."/>
            <person name="Randall-Maher J."/>
            <person name="Tomlinson C."/>
            <person name="Dauphin-Kohlberg S."/>
            <person name="Kozlowicz-Reilly A."/>
            <person name="Shah N."/>
            <person name="Swearengen-Shahid S."/>
            <person name="Snider J."/>
            <person name="Strong J.T."/>
            <person name="Thompson J."/>
            <person name="Yoakum M."/>
            <person name="Leonard S."/>
            <person name="Pearman C."/>
            <person name="Trani L."/>
            <person name="Radionenko M."/>
            <person name="Waligorski J.E."/>
            <person name="Wang C."/>
            <person name="Rock S.M."/>
            <person name="Tin-Wollam A.-M."/>
            <person name="Maupin R."/>
            <person name="Latreille P."/>
            <person name="Wendl M.C."/>
            <person name="Yang S.-P."/>
            <person name="Pohl C."/>
            <person name="Wallis J.W."/>
            <person name="Spieth J."/>
            <person name="Bieri T.A."/>
            <person name="Berkowicz N."/>
            <person name="Nelson J.O."/>
            <person name="Osborne J."/>
            <person name="Ding L."/>
            <person name="Meyer R."/>
            <person name="Sabo A."/>
            <person name="Shotland Y."/>
            <person name="Sinha P."/>
            <person name="Wohldmann P.E."/>
            <person name="Cook L.L."/>
            <person name="Hickenbotham M.T."/>
            <person name="Eldred J."/>
            <person name="Williams D."/>
            <person name="Jones T.A."/>
            <person name="She X."/>
            <person name="Ciccarelli F.D."/>
            <person name="Izaurralde E."/>
            <person name="Taylor J."/>
            <person name="Schmutz J."/>
            <person name="Myers R.M."/>
            <person name="Cox D.R."/>
            <person name="Huang X."/>
            <person name="McPherson J.D."/>
            <person name="Mardis E.R."/>
            <person name="Clifton S.W."/>
            <person name="Warren W.C."/>
            <person name="Chinwalla A.T."/>
            <person name="Eddy S.R."/>
            <person name="Marra M.A."/>
            <person name="Ovcharenko I."/>
            <person name="Furey T.S."/>
            <person name="Miller W."/>
            <person name="Eichler E.E."/>
            <person name="Bork P."/>
            <person name="Suyama M."/>
            <person name="Torrents D."/>
            <person name="Waterston R.H."/>
            <person name="Wilson R.K."/>
        </authorList>
    </citation>
    <scope>NUCLEOTIDE SEQUENCE [LARGE SCALE GENOMIC DNA]</scope>
</reference>
<reference key="3">
    <citation type="journal article" date="2014" name="Mol. Cell. Proteomics">
        <title>Immunoaffinity enrichment and mass spectrometry analysis of protein methylation.</title>
        <authorList>
            <person name="Guo A."/>
            <person name="Gu H."/>
            <person name="Zhou J."/>
            <person name="Mulhern D."/>
            <person name="Wang Y."/>
            <person name="Lee K.A."/>
            <person name="Yang V."/>
            <person name="Aguiar M."/>
            <person name="Kornhauser J."/>
            <person name="Jia X."/>
            <person name="Ren J."/>
            <person name="Beausoleil S.A."/>
            <person name="Silva J.C."/>
            <person name="Vemulapalli V."/>
            <person name="Bedford M.T."/>
            <person name="Comb M.J."/>
        </authorList>
    </citation>
    <scope>METHYLATION [LARGE SCALE ANALYSIS] AT ARG-189</scope>
    <scope>IDENTIFICATION BY MASS SPECTROMETRY [LARGE SCALE ANALYSIS]</scope>
    <source>
        <tissue>Colon carcinoma</tissue>
    </source>
</reference>
<proteinExistence type="evidence at protein level"/>
<comment type="function">
    <text evidence="1 2">Transcription factor which binds to specific A/T-rich DNA sequences in the promoter regions of a number of genes. Involved in the development of insulin-producing beta cells in the islets of Langerhans at the secondary transition (By similarity). Together with NKX2-2 and IRX3 acts to restrict the generation of motor neurons to the appropriate region of the neural tube. Belongs to the class II proteins of neuronal progenitor factors, which are induced by SHH signals (By similarity).</text>
</comment>
<comment type="subcellular location">
    <subcellularLocation>
        <location evidence="5">Nucleus</location>
    </subcellularLocation>
</comment>
<comment type="tissue specificity">
    <text>Pancreatic beta cells.</text>
</comment>
<comment type="domain">
    <text evidence="1">The C-terminal domain contributes to sequence-specific DNA-binding.</text>
</comment>
<evidence type="ECO:0000250" key="1"/>
<evidence type="ECO:0000250" key="2">
    <source>
        <dbReference type="UniProtKB" id="Q99MA9"/>
    </source>
</evidence>
<evidence type="ECO:0000255" key="3">
    <source>
        <dbReference type="PROSITE-ProRule" id="PRU00108"/>
    </source>
</evidence>
<evidence type="ECO:0000256" key="4">
    <source>
        <dbReference type="SAM" id="MobiDB-lite"/>
    </source>
</evidence>
<evidence type="ECO:0000305" key="5"/>
<evidence type="ECO:0007744" key="6">
    <source>
    </source>
</evidence>
<keyword id="KW-0010">Activator</keyword>
<keyword id="KW-0217">Developmental protein</keyword>
<keyword id="KW-0238">DNA-binding</keyword>
<keyword id="KW-0371">Homeobox</keyword>
<keyword id="KW-0488">Methylation</keyword>
<keyword id="KW-0539">Nucleus</keyword>
<keyword id="KW-1267">Proteomics identification</keyword>
<keyword id="KW-1185">Reference proteome</keyword>
<keyword id="KW-0678">Repressor</keyword>
<keyword id="KW-0804">Transcription</keyword>
<keyword id="KW-0805">Transcription regulation</keyword>
<accession>P78426</accession>
<protein>
    <recommendedName>
        <fullName>Homeobox protein Nkx-6.1</fullName>
    </recommendedName>
    <alternativeName>
        <fullName>Homeobox protein NK-6 homolog A</fullName>
    </alternativeName>
</protein>
<name>NKX61_HUMAN</name>
<gene>
    <name type="primary">NKX6-1</name>
    <name type="synonym">NKX6A</name>
</gene>
<dbReference type="EMBL" id="U66799">
    <property type="protein sequence ID" value="AAD11962.1"/>
    <property type="molecule type" value="Genomic_DNA"/>
</dbReference>
<dbReference type="EMBL" id="U66797">
    <property type="protein sequence ID" value="AAD11962.1"/>
    <property type="status" value="JOINED"/>
    <property type="molecule type" value="Genomic_DNA"/>
</dbReference>
<dbReference type="EMBL" id="U66798">
    <property type="protein sequence ID" value="AAD11962.1"/>
    <property type="status" value="JOINED"/>
    <property type="molecule type" value="Genomic_DNA"/>
</dbReference>
<dbReference type="EMBL" id="AC096766">
    <property type="status" value="NOT_ANNOTATED_CDS"/>
    <property type="molecule type" value="Genomic_DNA"/>
</dbReference>
<dbReference type="CCDS" id="CCDS3607.1"/>
<dbReference type="RefSeq" id="NP_006159.2">
    <property type="nucleotide sequence ID" value="NM_006168.3"/>
</dbReference>
<dbReference type="SMR" id="P78426"/>
<dbReference type="BioGRID" id="110889">
    <property type="interactions" value="3"/>
</dbReference>
<dbReference type="FunCoup" id="P78426">
    <property type="interactions" value="837"/>
</dbReference>
<dbReference type="IntAct" id="P78426">
    <property type="interactions" value="1"/>
</dbReference>
<dbReference type="MINT" id="P78426"/>
<dbReference type="STRING" id="9606.ENSP00000295886"/>
<dbReference type="iPTMnet" id="P78426"/>
<dbReference type="PhosphoSitePlus" id="P78426"/>
<dbReference type="BioMuta" id="NKX6-1"/>
<dbReference type="DMDM" id="288558819"/>
<dbReference type="jPOST" id="P78426"/>
<dbReference type="MassIVE" id="P78426"/>
<dbReference type="PaxDb" id="9606-ENSP00000295886"/>
<dbReference type="PeptideAtlas" id="P78426"/>
<dbReference type="Pumba" id="P78426"/>
<dbReference type="Antibodypedia" id="25238">
    <property type="antibodies" value="343 antibodies from 32 providers"/>
</dbReference>
<dbReference type="DNASU" id="4825"/>
<dbReference type="Ensembl" id="ENST00000295886.5">
    <property type="protein sequence ID" value="ENSP00000295886.3"/>
    <property type="gene ID" value="ENSG00000163623.10"/>
</dbReference>
<dbReference type="GeneID" id="4825"/>
<dbReference type="KEGG" id="hsa:4825"/>
<dbReference type="MANE-Select" id="ENST00000295886.5">
    <property type="protein sequence ID" value="ENSP00000295886.3"/>
    <property type="RefSeq nucleotide sequence ID" value="NM_006168.3"/>
    <property type="RefSeq protein sequence ID" value="NP_006159.2"/>
</dbReference>
<dbReference type="UCSC" id="uc003hpa.2">
    <property type="organism name" value="human"/>
</dbReference>
<dbReference type="AGR" id="HGNC:7839"/>
<dbReference type="CTD" id="4825"/>
<dbReference type="DisGeNET" id="4825"/>
<dbReference type="GeneCards" id="NKX6-1"/>
<dbReference type="HGNC" id="HGNC:7839">
    <property type="gene designation" value="NKX6-1"/>
</dbReference>
<dbReference type="HPA" id="ENSG00000163623">
    <property type="expression patterns" value="Tissue enhanced (brain, esophagus, pancreas, thyroid gland)"/>
</dbReference>
<dbReference type="MIM" id="602563">
    <property type="type" value="gene"/>
</dbReference>
<dbReference type="neXtProt" id="NX_P78426"/>
<dbReference type="OpenTargets" id="ENSG00000163623"/>
<dbReference type="PharmGKB" id="PA31646"/>
<dbReference type="VEuPathDB" id="HostDB:ENSG00000163623"/>
<dbReference type="eggNOG" id="KOG0847">
    <property type="taxonomic scope" value="Eukaryota"/>
</dbReference>
<dbReference type="GeneTree" id="ENSGT00940000160897"/>
<dbReference type="HOGENOM" id="CLU_064820_0_0_1"/>
<dbReference type="InParanoid" id="P78426"/>
<dbReference type="OMA" id="QMDGTRQ"/>
<dbReference type="OrthoDB" id="6159439at2759"/>
<dbReference type="PAN-GO" id="P78426">
    <property type="GO annotations" value="5 GO annotations based on evolutionary models"/>
</dbReference>
<dbReference type="PhylomeDB" id="P78426"/>
<dbReference type="TreeFam" id="TF327063"/>
<dbReference type="PathwayCommons" id="P78426"/>
<dbReference type="Reactome" id="R-HSA-210745">
    <property type="pathway name" value="Regulation of gene expression in beta cells"/>
</dbReference>
<dbReference type="Reactome" id="R-HSA-210747">
    <property type="pathway name" value="Regulation of gene expression in early pancreatic precursor cells"/>
</dbReference>
<dbReference type="Reactome" id="R-HSA-9925561">
    <property type="pathway name" value="Developmental Lineage of Pancreatic Acinar Cells"/>
</dbReference>
<dbReference type="SignaLink" id="P78426"/>
<dbReference type="SIGNOR" id="P78426"/>
<dbReference type="BioGRID-ORCS" id="4825">
    <property type="hits" value="16 hits in 1167 CRISPR screens"/>
</dbReference>
<dbReference type="GeneWiki" id="NKX6-1"/>
<dbReference type="GenomeRNAi" id="4825"/>
<dbReference type="Pharos" id="P78426">
    <property type="development level" value="Tbio"/>
</dbReference>
<dbReference type="PRO" id="PR:P78426"/>
<dbReference type="Proteomes" id="UP000005640">
    <property type="component" value="Chromosome 4"/>
</dbReference>
<dbReference type="RNAct" id="P78426">
    <property type="molecule type" value="protein"/>
</dbReference>
<dbReference type="Bgee" id="ENSG00000163623">
    <property type="expression patterns" value="Expressed in lower esophagus muscularis layer and 57 other cell types or tissues"/>
</dbReference>
<dbReference type="ExpressionAtlas" id="P78426">
    <property type="expression patterns" value="baseline and differential"/>
</dbReference>
<dbReference type="GO" id="GO:0000785">
    <property type="term" value="C:chromatin"/>
    <property type="evidence" value="ECO:0000247"/>
    <property type="project" value="NTNU_SB"/>
</dbReference>
<dbReference type="GO" id="GO:0070062">
    <property type="term" value="C:extracellular exosome"/>
    <property type="evidence" value="ECO:0007005"/>
    <property type="project" value="UniProtKB"/>
</dbReference>
<dbReference type="GO" id="GO:0005634">
    <property type="term" value="C:nucleus"/>
    <property type="evidence" value="ECO:0000318"/>
    <property type="project" value="GO_Central"/>
</dbReference>
<dbReference type="GO" id="GO:0003682">
    <property type="term" value="F:chromatin binding"/>
    <property type="evidence" value="ECO:0007669"/>
    <property type="project" value="Ensembl"/>
</dbReference>
<dbReference type="GO" id="GO:0001228">
    <property type="term" value="F:DNA-binding transcription activator activity, RNA polymerase II-specific"/>
    <property type="evidence" value="ECO:0000250"/>
    <property type="project" value="BHF-UCL"/>
</dbReference>
<dbReference type="GO" id="GO:0000981">
    <property type="term" value="F:DNA-binding transcription factor activity, RNA polymerase II-specific"/>
    <property type="evidence" value="ECO:0000247"/>
    <property type="project" value="NTNU_SB"/>
</dbReference>
<dbReference type="GO" id="GO:0001227">
    <property type="term" value="F:DNA-binding transcription repressor activity, RNA polymerase II-specific"/>
    <property type="evidence" value="ECO:0007669"/>
    <property type="project" value="Ensembl"/>
</dbReference>
<dbReference type="GO" id="GO:0000978">
    <property type="term" value="F:RNA polymerase II cis-regulatory region sequence-specific DNA binding"/>
    <property type="evidence" value="ECO:0000318"/>
    <property type="project" value="GO_Central"/>
</dbReference>
<dbReference type="GO" id="GO:0061629">
    <property type="term" value="F:RNA polymerase II-specific DNA-binding transcription factor binding"/>
    <property type="evidence" value="ECO:0000250"/>
    <property type="project" value="BHF-UCL"/>
</dbReference>
<dbReference type="GO" id="GO:0009887">
    <property type="term" value="P:animal organ morphogenesis"/>
    <property type="evidence" value="ECO:0000304"/>
    <property type="project" value="ProtInc"/>
</dbReference>
<dbReference type="GO" id="GO:0030154">
    <property type="term" value="P:cell differentiation"/>
    <property type="evidence" value="ECO:0000318"/>
    <property type="project" value="GO_Central"/>
</dbReference>
<dbReference type="GO" id="GO:0071345">
    <property type="term" value="P:cellular response to cytokine stimulus"/>
    <property type="evidence" value="ECO:0007669"/>
    <property type="project" value="Ensembl"/>
</dbReference>
<dbReference type="GO" id="GO:0071375">
    <property type="term" value="P:cellular response to peptide hormone stimulus"/>
    <property type="evidence" value="ECO:0007669"/>
    <property type="project" value="Ensembl"/>
</dbReference>
<dbReference type="GO" id="GO:0021953">
    <property type="term" value="P:central nervous system neuron differentiation"/>
    <property type="evidence" value="ECO:0007669"/>
    <property type="project" value="Ensembl"/>
</dbReference>
<dbReference type="GO" id="GO:0010255">
    <property type="term" value="P:glucose mediated signaling pathway"/>
    <property type="evidence" value="ECO:0000250"/>
    <property type="project" value="BHF-UCL"/>
</dbReference>
<dbReference type="GO" id="GO:0048715">
    <property type="term" value="P:negative regulation of oligodendrocyte differentiation"/>
    <property type="evidence" value="ECO:0007669"/>
    <property type="project" value="Ensembl"/>
</dbReference>
<dbReference type="GO" id="GO:0000122">
    <property type="term" value="P:negative regulation of transcription by RNA polymerase II"/>
    <property type="evidence" value="ECO:0000250"/>
    <property type="project" value="BHF-UCL"/>
</dbReference>
<dbReference type="GO" id="GO:0048709">
    <property type="term" value="P:oligodendrocyte differentiation"/>
    <property type="evidence" value="ECO:0007669"/>
    <property type="project" value="Ensembl"/>
</dbReference>
<dbReference type="GO" id="GO:0031016">
    <property type="term" value="P:pancreas development"/>
    <property type="evidence" value="ECO:0000250"/>
    <property type="project" value="BHF-UCL"/>
</dbReference>
<dbReference type="GO" id="GO:0003310">
    <property type="term" value="P:pancreatic A cell differentiation"/>
    <property type="evidence" value="ECO:0007669"/>
    <property type="project" value="Ensembl"/>
</dbReference>
<dbReference type="GO" id="GO:0032024">
    <property type="term" value="P:positive regulation of insulin secretion"/>
    <property type="evidence" value="ECO:0007669"/>
    <property type="project" value="Ensembl"/>
</dbReference>
<dbReference type="GO" id="GO:0045666">
    <property type="term" value="P:positive regulation of neuron differentiation"/>
    <property type="evidence" value="ECO:0007669"/>
    <property type="project" value="Ensembl"/>
</dbReference>
<dbReference type="GO" id="GO:0048714">
    <property type="term" value="P:positive regulation of oligodendrocyte differentiation"/>
    <property type="evidence" value="ECO:0007669"/>
    <property type="project" value="Ensembl"/>
</dbReference>
<dbReference type="GO" id="GO:0045944">
    <property type="term" value="P:positive regulation of transcription by RNA polymerase II"/>
    <property type="evidence" value="ECO:0000250"/>
    <property type="project" value="BHF-UCL"/>
</dbReference>
<dbReference type="GO" id="GO:2000078">
    <property type="term" value="P:positive regulation of type B pancreatic cell development"/>
    <property type="evidence" value="ECO:0000250"/>
    <property type="project" value="BHF-UCL"/>
</dbReference>
<dbReference type="GO" id="GO:0030516">
    <property type="term" value="P:regulation of axon extension"/>
    <property type="evidence" value="ECO:0007669"/>
    <property type="project" value="Ensembl"/>
</dbReference>
<dbReference type="GO" id="GO:2001222">
    <property type="term" value="P:regulation of neuron migration"/>
    <property type="evidence" value="ECO:0007669"/>
    <property type="project" value="Ensembl"/>
</dbReference>
<dbReference type="GO" id="GO:0006357">
    <property type="term" value="P:regulation of transcription by RNA polymerase II"/>
    <property type="evidence" value="ECO:0000318"/>
    <property type="project" value="GO_Central"/>
</dbReference>
<dbReference type="GO" id="GO:0035094">
    <property type="term" value="P:response to nicotine"/>
    <property type="evidence" value="ECO:0007669"/>
    <property type="project" value="Ensembl"/>
</dbReference>
<dbReference type="GO" id="GO:0009410">
    <property type="term" value="P:response to xenobiotic stimulus"/>
    <property type="evidence" value="ECO:0007669"/>
    <property type="project" value="Ensembl"/>
</dbReference>
<dbReference type="GO" id="GO:0007224">
    <property type="term" value="P:smoothened signaling pathway"/>
    <property type="evidence" value="ECO:0007669"/>
    <property type="project" value="Ensembl"/>
</dbReference>
<dbReference type="GO" id="GO:0006366">
    <property type="term" value="P:transcription by RNA polymerase II"/>
    <property type="evidence" value="ECO:0007669"/>
    <property type="project" value="Ensembl"/>
</dbReference>
<dbReference type="GO" id="GO:0072560">
    <property type="term" value="P:type B pancreatic cell maturation"/>
    <property type="evidence" value="ECO:0000250"/>
    <property type="project" value="BHF-UCL"/>
</dbReference>
<dbReference type="GO" id="GO:0044342">
    <property type="term" value="P:type B pancreatic cell proliferation"/>
    <property type="evidence" value="ECO:0000250"/>
    <property type="project" value="UniProtKB"/>
</dbReference>
<dbReference type="CDD" id="cd00086">
    <property type="entry name" value="homeodomain"/>
    <property type="match status" value="1"/>
</dbReference>
<dbReference type="FunFam" id="1.10.10.60:FF:000067">
    <property type="entry name" value="NK6 homeobox 1"/>
    <property type="match status" value="1"/>
</dbReference>
<dbReference type="Gene3D" id="1.10.10.60">
    <property type="entry name" value="Homeodomain-like"/>
    <property type="match status" value="1"/>
</dbReference>
<dbReference type="InterPro" id="IPR001356">
    <property type="entry name" value="HD"/>
</dbReference>
<dbReference type="InterPro" id="IPR020479">
    <property type="entry name" value="HD_metazoa"/>
</dbReference>
<dbReference type="InterPro" id="IPR017970">
    <property type="entry name" value="Homeobox_CS"/>
</dbReference>
<dbReference type="InterPro" id="IPR050394">
    <property type="entry name" value="Homeobox_NK-like"/>
</dbReference>
<dbReference type="InterPro" id="IPR009057">
    <property type="entry name" value="Homeodomain-like_sf"/>
</dbReference>
<dbReference type="InterPro" id="IPR000047">
    <property type="entry name" value="HTH_motif"/>
</dbReference>
<dbReference type="PANTHER" id="PTHR24340">
    <property type="entry name" value="HOMEOBOX PROTEIN NKX"/>
    <property type="match status" value="1"/>
</dbReference>
<dbReference type="PANTHER" id="PTHR24340:SF31">
    <property type="entry name" value="HOMEOBOX PROTEIN NKX-6.1"/>
    <property type="match status" value="1"/>
</dbReference>
<dbReference type="Pfam" id="PF00046">
    <property type="entry name" value="Homeodomain"/>
    <property type="match status" value="1"/>
</dbReference>
<dbReference type="PRINTS" id="PR00024">
    <property type="entry name" value="HOMEOBOX"/>
</dbReference>
<dbReference type="PRINTS" id="PR00031">
    <property type="entry name" value="HTHREPRESSR"/>
</dbReference>
<dbReference type="SMART" id="SM00389">
    <property type="entry name" value="HOX"/>
    <property type="match status" value="1"/>
</dbReference>
<dbReference type="SUPFAM" id="SSF46689">
    <property type="entry name" value="Homeodomain-like"/>
    <property type="match status" value="1"/>
</dbReference>
<dbReference type="PROSITE" id="PS00027">
    <property type="entry name" value="HOMEOBOX_1"/>
    <property type="match status" value="1"/>
</dbReference>
<dbReference type="PROSITE" id="PS50071">
    <property type="entry name" value="HOMEOBOX_2"/>
    <property type="match status" value="1"/>
</dbReference>
<sequence>MLAVGAMEGTRQSAFLLSSPPLAALHSMAEMKTPLYPAAYPPLPAGPPSSSSSSSSSSSPSPPLGTHNPGGLKPPATGGLSSLGSPPQQLSAATPHGINDILSRPSMPVASGAALPSASPSGSSSSSSSSASASSASAAAAAAAAAAAAASSPAGLLAGLPRFSSLSPPPPPPGLYFSPSAAAVAAVGRYPKPLAELPGRTPIFWPGVMQSPPWRDARLACTPHQGSILLDKDGKRKHTRPTFSGQQIFALEKTFEQTKYLAGPERARLAYSLGMTESQVKVWFQNRRTKWRKKHAAEMATAKKKQDSETERLKGASENEEEDDDYNKPLDPNSDDEKITQLLKKHKSSSGGGGGLLLHASEPESSS</sequence>
<organism>
    <name type="scientific">Homo sapiens</name>
    <name type="common">Human</name>
    <dbReference type="NCBI Taxonomy" id="9606"/>
    <lineage>
        <taxon>Eukaryota</taxon>
        <taxon>Metazoa</taxon>
        <taxon>Chordata</taxon>
        <taxon>Craniata</taxon>
        <taxon>Vertebrata</taxon>
        <taxon>Euteleostomi</taxon>
        <taxon>Mammalia</taxon>
        <taxon>Eutheria</taxon>
        <taxon>Euarchontoglires</taxon>
        <taxon>Primates</taxon>
        <taxon>Haplorrhini</taxon>
        <taxon>Catarrhini</taxon>
        <taxon>Hominidae</taxon>
        <taxon>Homo</taxon>
    </lineage>
</organism>